<dbReference type="EMBL" id="BC076955">
    <property type="protein sequence ID" value="AAH76955.1"/>
    <property type="molecule type" value="mRNA"/>
</dbReference>
<dbReference type="RefSeq" id="NP_001005061.1">
    <property type="nucleotide sequence ID" value="NM_001005061.1"/>
</dbReference>
<dbReference type="SMR" id="Q6DEY8"/>
<dbReference type="FunCoup" id="Q6DEY8">
    <property type="interactions" value="1284"/>
</dbReference>
<dbReference type="STRING" id="8364.ENSXETP00000028997"/>
<dbReference type="PaxDb" id="8364-ENSXETP00000050138"/>
<dbReference type="GeneID" id="448614"/>
<dbReference type="KEGG" id="xtr:448614"/>
<dbReference type="AGR" id="Xenbase:XB-GENE-969766"/>
<dbReference type="CTD" id="93594"/>
<dbReference type="Xenbase" id="XB-GENE-969766">
    <property type="gene designation" value="tbc1d31"/>
</dbReference>
<dbReference type="eggNOG" id="KOG0295">
    <property type="taxonomic scope" value="Eukaryota"/>
</dbReference>
<dbReference type="eggNOG" id="KOG1093">
    <property type="taxonomic scope" value="Eukaryota"/>
</dbReference>
<dbReference type="InParanoid" id="Q6DEY8"/>
<dbReference type="OrthoDB" id="5578278at2759"/>
<dbReference type="Proteomes" id="UP000008143">
    <property type="component" value="Chromosome 6"/>
</dbReference>
<dbReference type="GO" id="GO:0034451">
    <property type="term" value="C:centriolar satellite"/>
    <property type="evidence" value="ECO:0000250"/>
    <property type="project" value="UniProtKB"/>
</dbReference>
<dbReference type="GO" id="GO:0005813">
    <property type="term" value="C:centrosome"/>
    <property type="evidence" value="ECO:0000250"/>
    <property type="project" value="UniProtKB"/>
</dbReference>
<dbReference type="GO" id="GO:0036064">
    <property type="term" value="C:ciliary basal body"/>
    <property type="evidence" value="ECO:0000250"/>
    <property type="project" value="UniProtKB"/>
</dbReference>
<dbReference type="GO" id="GO:0005737">
    <property type="term" value="C:cytoplasm"/>
    <property type="evidence" value="ECO:0007669"/>
    <property type="project" value="UniProtKB-KW"/>
</dbReference>
<dbReference type="GO" id="GO:0060090">
    <property type="term" value="F:molecular adaptor activity"/>
    <property type="evidence" value="ECO:0000250"/>
    <property type="project" value="UniProtKB"/>
</dbReference>
<dbReference type="GO" id="GO:0060271">
    <property type="term" value="P:cilium assembly"/>
    <property type="evidence" value="ECO:0000250"/>
    <property type="project" value="UniProtKB"/>
</dbReference>
<dbReference type="FunFam" id="2.130.10.10:FF:000226">
    <property type="entry name" value="TBC1 domain family member 31"/>
    <property type="match status" value="1"/>
</dbReference>
<dbReference type="FunFam" id="2.130.10.10:FF:000185">
    <property type="entry name" value="TBC1 domain family member 31 isoform X1"/>
    <property type="match status" value="1"/>
</dbReference>
<dbReference type="FunFam" id="1.10.472.80:FF:000022">
    <property type="entry name" value="TBC1 domain family, member 31"/>
    <property type="match status" value="1"/>
</dbReference>
<dbReference type="Gene3D" id="1.10.472.80">
    <property type="entry name" value="Ypt/Rab-GAP domain of gyp1p, domain 3"/>
    <property type="match status" value="1"/>
</dbReference>
<dbReference type="Gene3D" id="2.130.10.10">
    <property type="entry name" value="YVTN repeat-like/Quinoprotein amine dehydrogenase"/>
    <property type="match status" value="2"/>
</dbReference>
<dbReference type="InterPro" id="IPR000195">
    <property type="entry name" value="Rab-GAP-TBC_dom"/>
</dbReference>
<dbReference type="InterPro" id="IPR035969">
    <property type="entry name" value="Rab-GAP_TBC_sf"/>
</dbReference>
<dbReference type="InterPro" id="IPR051570">
    <property type="entry name" value="TBC1_cilium_biogenesis"/>
</dbReference>
<dbReference type="InterPro" id="IPR015943">
    <property type="entry name" value="WD40/YVTN_repeat-like_dom_sf"/>
</dbReference>
<dbReference type="InterPro" id="IPR036322">
    <property type="entry name" value="WD40_repeat_dom_sf"/>
</dbReference>
<dbReference type="InterPro" id="IPR001680">
    <property type="entry name" value="WD40_rpt"/>
</dbReference>
<dbReference type="PANTHER" id="PTHR19853:SF1">
    <property type="entry name" value="TBC1 DOMAIN FAMILY MEMBER 31"/>
    <property type="match status" value="1"/>
</dbReference>
<dbReference type="PANTHER" id="PTHR19853">
    <property type="entry name" value="WD REPEAT CONTAINING PROTEIN 3 WDR3"/>
    <property type="match status" value="1"/>
</dbReference>
<dbReference type="Pfam" id="PF00566">
    <property type="entry name" value="RabGAP-TBC"/>
    <property type="match status" value="1"/>
</dbReference>
<dbReference type="Pfam" id="PF00400">
    <property type="entry name" value="WD40"/>
    <property type="match status" value="1"/>
</dbReference>
<dbReference type="SMART" id="SM00320">
    <property type="entry name" value="WD40"/>
    <property type="match status" value="6"/>
</dbReference>
<dbReference type="SUPFAM" id="SSF50978">
    <property type="entry name" value="WD40 repeat-like"/>
    <property type="match status" value="1"/>
</dbReference>
<dbReference type="SUPFAM" id="SSF47923">
    <property type="entry name" value="Ypt/Rab-GAP domain of gyp1p"/>
    <property type="match status" value="1"/>
</dbReference>
<dbReference type="PROSITE" id="PS50086">
    <property type="entry name" value="TBC_RABGAP"/>
    <property type="match status" value="1"/>
</dbReference>
<dbReference type="PROSITE" id="PS00678">
    <property type="entry name" value="WD_REPEATS_1"/>
    <property type="match status" value="1"/>
</dbReference>
<dbReference type="PROSITE" id="PS50082">
    <property type="entry name" value="WD_REPEATS_2"/>
    <property type="match status" value="1"/>
</dbReference>
<dbReference type="PROSITE" id="PS50294">
    <property type="entry name" value="WD_REPEATS_REGION"/>
    <property type="match status" value="1"/>
</dbReference>
<accession>Q6DEY8</accession>
<protein>
    <recommendedName>
        <fullName evidence="5">TBC1 domain family member 31</fullName>
    </recommendedName>
</protein>
<evidence type="ECO:0000250" key="1">
    <source>
        <dbReference type="UniProtKB" id="Q96DN5"/>
    </source>
</evidence>
<evidence type="ECO:0000255" key="2"/>
<evidence type="ECO:0000255" key="3">
    <source>
        <dbReference type="PROSITE-ProRule" id="PRU00163"/>
    </source>
</evidence>
<evidence type="ECO:0000256" key="4">
    <source>
        <dbReference type="SAM" id="MobiDB-lite"/>
    </source>
</evidence>
<evidence type="ECO:0000305" key="5"/>
<organism>
    <name type="scientific">Xenopus tropicalis</name>
    <name type="common">Western clawed frog</name>
    <name type="synonym">Silurana tropicalis</name>
    <dbReference type="NCBI Taxonomy" id="8364"/>
    <lineage>
        <taxon>Eukaryota</taxon>
        <taxon>Metazoa</taxon>
        <taxon>Chordata</taxon>
        <taxon>Craniata</taxon>
        <taxon>Vertebrata</taxon>
        <taxon>Euteleostomi</taxon>
        <taxon>Amphibia</taxon>
        <taxon>Batrachia</taxon>
        <taxon>Anura</taxon>
        <taxon>Pipoidea</taxon>
        <taxon>Pipidae</taxon>
        <taxon>Xenopodinae</taxon>
        <taxon>Xenopus</taxon>
        <taxon>Silurana</taxon>
    </lineage>
</organism>
<reference key="1">
    <citation type="submission" date="2004-07" db="EMBL/GenBank/DDBJ databases">
        <authorList>
            <consortium name="NIH - Xenopus Gene Collection (XGC) project"/>
        </authorList>
    </citation>
    <scope>NUCLEOTIDE SEQUENCE [LARGE SCALE MRNA]</scope>
    <source>
        <tissue>Embryo</tissue>
    </source>
</reference>
<comment type="function">
    <text evidence="1">Molecular adapter which is involved in cilium biogenesis. Part of a functional complex including OFD1 a centriolar protein involved in cilium assembly. Could regulate the cAMP-dependent phosphorylation of OFD1, and its subsequent ubiquitination by PJA2 which ultimately leads to its proteasomal degradation.</text>
</comment>
<comment type="subcellular location">
    <subcellularLocation>
        <location evidence="1">Cytoplasm</location>
        <location evidence="1">Cytoskeleton</location>
        <location evidence="1">Microtubule organizing center</location>
        <location evidence="1">Centrosome</location>
    </subcellularLocation>
    <subcellularLocation>
        <location evidence="1">Cytoplasm</location>
        <location evidence="1">Cytoskeleton</location>
        <location evidence="1">Microtubule organizing center</location>
        <location evidence="1">Centrosome</location>
        <location evidence="1">Centriolar satellite</location>
    </subcellularLocation>
    <subcellularLocation>
        <location evidence="1">Cytoplasm</location>
        <location evidence="1">Cytoskeleton</location>
        <location evidence="1">Cilium basal body</location>
    </subcellularLocation>
</comment>
<feature type="chain" id="PRO_0000051424" description="TBC1 domain family member 31">
    <location>
        <begin position="1"/>
        <end position="1088"/>
    </location>
</feature>
<feature type="repeat" description="WD 1">
    <location>
        <begin position="33"/>
        <end position="74"/>
    </location>
</feature>
<feature type="repeat" description="WD 2">
    <location>
        <begin position="75"/>
        <end position="116"/>
    </location>
</feature>
<feature type="repeat" description="WD 3">
    <location>
        <begin position="117"/>
        <end position="157"/>
    </location>
</feature>
<feature type="repeat" description="WD 4">
    <location>
        <begin position="158"/>
        <end position="200"/>
    </location>
</feature>
<feature type="repeat" description="WD 5">
    <location>
        <begin position="201"/>
        <end position="248"/>
    </location>
</feature>
<feature type="repeat" description="WD 6">
    <location>
        <begin position="249"/>
        <end position="296"/>
    </location>
</feature>
<feature type="repeat" description="WD 7">
    <location>
        <begin position="297"/>
        <end position="334"/>
    </location>
</feature>
<feature type="domain" description="Rab-GAP TBC" evidence="3">
    <location>
        <begin position="432"/>
        <end position="607"/>
    </location>
</feature>
<feature type="region of interest" description="Disordered" evidence="4">
    <location>
        <begin position="1"/>
        <end position="20"/>
    </location>
</feature>
<feature type="region of interest" description="Disordered" evidence="4">
    <location>
        <begin position="356"/>
        <end position="381"/>
    </location>
</feature>
<feature type="coiled-coil region" evidence="2">
    <location>
        <begin position="736"/>
        <end position="903"/>
    </location>
</feature>
<feature type="coiled-coil region" evidence="2">
    <location>
        <begin position="1048"/>
        <end position="1076"/>
    </location>
</feature>
<feature type="compositionally biased region" description="Polar residues" evidence="4">
    <location>
        <begin position="363"/>
        <end position="372"/>
    </location>
</feature>
<keyword id="KW-0966">Cell projection</keyword>
<keyword id="KW-0970">Cilium biogenesis/degradation</keyword>
<keyword id="KW-0175">Coiled coil</keyword>
<keyword id="KW-0963">Cytoplasm</keyword>
<keyword id="KW-0206">Cytoskeleton</keyword>
<keyword id="KW-1185">Reference proteome</keyword>
<keyword id="KW-0677">Repeat</keyword>
<keyword id="KW-0853">WD repeat</keyword>
<name>TBC31_XENTR</name>
<gene>
    <name evidence="1" type="primary">tbc1d31</name>
</gene>
<proteinExistence type="evidence at transcript level"/>
<sequence length="1088" mass="126647">MQTTDLGNKESGKIWHRKPNPSTNEGIIVNIVHVDASHPSKSARFLHAGFDSAGDSFIAGDHLGNVYLFNLNRNRFDLVQKTMQACTAIAFNLHRRTEFLVALADNSVKCFDTGAKELVSWMRGHESAVTSISVHPSGRYAVTTSSDTAQLWDLDTFQRKRKLNVRQSVGIQKVFFLPLSNTILSCFKDDSIFAWESDTLACKYQLPIPEDGTKLRYKAFAITRDGRMLAAGGKSNNLHLWCLDSKQLFRIIQMPTKVRSVQQLEFLPENFDGGSSQILGVLSQDGIMRFINIQTCKLVFDIGSHDNGIVTSSVSPNGRYITSVMENGSLNIYSVQALSKELNKPPPPLVKMVDLSKDKDSTGNKSGVSGASQEKVRVSSGRTCRPWKSKDQIVRTKYLRPEDTTTSEDKENTLPAGLSKQRLQALLKGFGEYPAKYRMFIWRSLLQLPENHAAFSSLLDKGTHTQYKLLHQEYPIKSRKLLRVLQRTLSALAHWSAIFGETKYLPLLAFPFVKLFQNNQLICFEVVATVITNWCQHWFEYFPNPPINILGMVENLLAHHDKELLQHFINYGVTSQVYAWPLLETLFSEVLTREEWLRLFDNVFSNHPSFLLMAVVSYIISSRSPLLHCNQKDDFEYFFHHRNNLDIGNMIREAYHLMDTSPAEIHPRRLLSDFEPLTRGQYPIFNKYPKFIVDYQGQERERIRQEEIEYLRERQLTHKVEAEAVKRRLEDEAWYQQQELLKGAEEQRRKLLMDEEQKLLHQRQRLATVKRELRLKELQLLDAARRRFLRYQQDQRKMELRRLDDELERKMSLRERETATIAKDVEIRQMELEAQRRFFEQQLAKEQEAVTQEVKGEMDANRRRADLEEQMFWRLMETEEDLKDKKLLEESLAKAERLCVETDWKIQTLQKQKCDDQERGKRYVEVSKMTDDVREKERELCDVLKAMETRKWAEVSEKMTQLETEELASSALRAKRNQFLQERLRQEAEPVNISEDGNEYFERLRDLSRNSTQNDFSSSAERHVAENVCLNDVSASDSSTHFSLDRGRGELENRERALISEVRELRQKLATQARRKYPQLHFSETNWT</sequence>